<protein>
    <recommendedName>
        <fullName evidence="1">Putative manganese efflux pump MntP 1</fullName>
    </recommendedName>
</protein>
<proteinExistence type="inferred from homology"/>
<feature type="chain" id="PRO_0000292541" description="Putative manganese efflux pump MntP 1">
    <location>
        <begin position="1"/>
        <end position="197"/>
    </location>
</feature>
<feature type="transmembrane region" description="Helical" evidence="1">
    <location>
        <begin position="8"/>
        <end position="28"/>
    </location>
</feature>
<feature type="transmembrane region" description="Helical" evidence="1">
    <location>
        <begin position="43"/>
        <end position="63"/>
    </location>
</feature>
<feature type="transmembrane region" description="Helical" evidence="1">
    <location>
        <begin position="66"/>
        <end position="86"/>
    </location>
</feature>
<feature type="transmembrane region" description="Helical" evidence="1">
    <location>
        <begin position="123"/>
        <end position="143"/>
    </location>
</feature>
<feature type="transmembrane region" description="Helical" evidence="1">
    <location>
        <begin position="146"/>
        <end position="166"/>
    </location>
</feature>
<feature type="transmembrane region" description="Helical" evidence="1">
    <location>
        <begin position="176"/>
        <end position="196"/>
    </location>
</feature>
<evidence type="ECO:0000255" key="1">
    <source>
        <dbReference type="HAMAP-Rule" id="MF_01521"/>
    </source>
</evidence>
<gene>
    <name evidence="1" type="primary">mntP1</name>
    <name type="ordered locus">Pcryo_0007</name>
</gene>
<name>MNTP1_PSYCK</name>
<sequence>MDIEMIEVILLAIALAMDAFAVSIGLGAKSQKQSSAYVLRLAVYAALYFGIAQGVMPLIGYLLGAVLLGWLATAAPWLGGGILILLGAKMLYEAFNGEIEAVLEDSFDRNMQEKINHRMMFTLAIATSIDAMAAGFTLNLLALNAWLACSIIAIVTAGFGFFGIYLGKSSGTWLEDKAEILGGLVLIAIGIKVMFIR</sequence>
<comment type="function">
    <text evidence="1">Probably functions as a manganese efflux pump.</text>
</comment>
<comment type="subcellular location">
    <subcellularLocation>
        <location evidence="1">Cell inner membrane</location>
        <topology evidence="1">Multi-pass membrane protein</topology>
    </subcellularLocation>
</comment>
<comment type="similarity">
    <text evidence="1">Belongs to the MntP (TC 9.B.29) family.</text>
</comment>
<reference key="1">
    <citation type="submission" date="2006-03" db="EMBL/GenBank/DDBJ databases">
        <title>Complete sequence of chromosome of Psychrobacter cryohalolentis K5.</title>
        <authorList>
            <consortium name="US DOE Joint Genome Institute"/>
            <person name="Copeland A."/>
            <person name="Lucas S."/>
            <person name="Lapidus A."/>
            <person name="Barry K."/>
            <person name="Detter J.C."/>
            <person name="Glavina T."/>
            <person name="Hammon N."/>
            <person name="Israni S."/>
            <person name="Dalin E."/>
            <person name="Tice H."/>
            <person name="Pitluck S."/>
            <person name="Brettin T."/>
            <person name="Bruce D."/>
            <person name="Han C."/>
            <person name="Tapia R."/>
            <person name="Sims D.R."/>
            <person name="Gilna P."/>
            <person name="Schmutz J."/>
            <person name="Larimer F."/>
            <person name="Land M."/>
            <person name="Hauser L."/>
            <person name="Kyrpides N."/>
            <person name="Kim E."/>
            <person name="Richardson P."/>
        </authorList>
    </citation>
    <scope>NUCLEOTIDE SEQUENCE [LARGE SCALE GENOMIC DNA]</scope>
    <source>
        <strain>ATCC BAA-1226 / DSM 17306 / VKM B-2378 / K5</strain>
    </source>
</reference>
<organism>
    <name type="scientific">Psychrobacter cryohalolentis (strain ATCC BAA-1226 / DSM 17306 / VKM B-2378 / K5)</name>
    <dbReference type="NCBI Taxonomy" id="335284"/>
    <lineage>
        <taxon>Bacteria</taxon>
        <taxon>Pseudomonadati</taxon>
        <taxon>Pseudomonadota</taxon>
        <taxon>Gammaproteobacteria</taxon>
        <taxon>Moraxellales</taxon>
        <taxon>Moraxellaceae</taxon>
        <taxon>Psychrobacter</taxon>
    </lineage>
</organism>
<dbReference type="EMBL" id="CP000323">
    <property type="protein sequence ID" value="ABE73791.1"/>
    <property type="molecule type" value="Genomic_DNA"/>
</dbReference>
<dbReference type="KEGG" id="pcr:Pcryo_0007"/>
<dbReference type="eggNOG" id="COG1971">
    <property type="taxonomic scope" value="Bacteria"/>
</dbReference>
<dbReference type="HOGENOM" id="CLU_096410_3_0_6"/>
<dbReference type="Proteomes" id="UP000002425">
    <property type="component" value="Chromosome"/>
</dbReference>
<dbReference type="GO" id="GO:0005886">
    <property type="term" value="C:plasma membrane"/>
    <property type="evidence" value="ECO:0007669"/>
    <property type="project" value="UniProtKB-SubCell"/>
</dbReference>
<dbReference type="GO" id="GO:0005384">
    <property type="term" value="F:manganese ion transmembrane transporter activity"/>
    <property type="evidence" value="ECO:0007669"/>
    <property type="project" value="UniProtKB-UniRule"/>
</dbReference>
<dbReference type="HAMAP" id="MF_01521">
    <property type="entry name" value="MntP_pump"/>
    <property type="match status" value="1"/>
</dbReference>
<dbReference type="InterPro" id="IPR003810">
    <property type="entry name" value="Mntp/YtaF"/>
</dbReference>
<dbReference type="InterPro" id="IPR022929">
    <property type="entry name" value="Put_MntP"/>
</dbReference>
<dbReference type="PANTHER" id="PTHR35529">
    <property type="entry name" value="MANGANESE EFFLUX PUMP MNTP-RELATED"/>
    <property type="match status" value="1"/>
</dbReference>
<dbReference type="PANTHER" id="PTHR35529:SF1">
    <property type="entry name" value="MANGANESE EFFLUX PUMP MNTP-RELATED"/>
    <property type="match status" value="1"/>
</dbReference>
<dbReference type="Pfam" id="PF02659">
    <property type="entry name" value="Mntp"/>
    <property type="match status" value="1"/>
</dbReference>
<accession>Q1QEW2</accession>
<keyword id="KW-0997">Cell inner membrane</keyword>
<keyword id="KW-1003">Cell membrane</keyword>
<keyword id="KW-0406">Ion transport</keyword>
<keyword id="KW-0464">Manganese</keyword>
<keyword id="KW-0472">Membrane</keyword>
<keyword id="KW-0812">Transmembrane</keyword>
<keyword id="KW-1133">Transmembrane helix</keyword>
<keyword id="KW-0813">Transport</keyword>